<accession>Q9K625</accession>
<protein>
    <recommendedName>
        <fullName>Putative 8-amino-7-oxononanoate synthase</fullName>
        <shortName>AONS</shortName>
        <ecNumber>2.3.1.47</ecNumber>
    </recommendedName>
    <alternativeName>
        <fullName>7-keto-8-amino-pelargonic acid synthase</fullName>
        <shortName>7-KAP synthase</shortName>
    </alternativeName>
    <alternativeName>
        <fullName>8-amino-7-ketopelargonate synthase</fullName>
    </alternativeName>
</protein>
<comment type="function">
    <text evidence="1">Catalyzes the decarboxylative condensation of pimeloyl-[acyl-carrier protein] and L-alanine to produce 8-amino-7-oxononanoate (AON), [acyl-carrier protein], and carbon dioxide.</text>
</comment>
<comment type="catalytic activity">
    <reaction>
        <text>6-carboxyhexanoyl-[ACP] + L-alanine + H(+) = (8S)-8-amino-7-oxononanoate + holo-[ACP] + CO2</text>
        <dbReference type="Rhea" id="RHEA:42288"/>
        <dbReference type="Rhea" id="RHEA-COMP:9685"/>
        <dbReference type="Rhea" id="RHEA-COMP:9955"/>
        <dbReference type="ChEBI" id="CHEBI:15378"/>
        <dbReference type="ChEBI" id="CHEBI:16526"/>
        <dbReference type="ChEBI" id="CHEBI:57972"/>
        <dbReference type="ChEBI" id="CHEBI:64479"/>
        <dbReference type="ChEBI" id="CHEBI:78846"/>
        <dbReference type="ChEBI" id="CHEBI:149468"/>
        <dbReference type="EC" id="2.3.1.47"/>
    </reaction>
</comment>
<comment type="cofactor">
    <cofactor evidence="1">
        <name>pyridoxal 5'-phosphate</name>
        <dbReference type="ChEBI" id="CHEBI:597326"/>
    </cofactor>
</comment>
<comment type="pathway">
    <text>Cofactor biosynthesis; biotin biosynthesis.</text>
</comment>
<comment type="subunit">
    <text evidence="1">Homodimer.</text>
</comment>
<comment type="similarity">
    <text evidence="2">Belongs to the class-II pyridoxal-phosphate-dependent aminotransferase family. BioF subfamily.</text>
</comment>
<evidence type="ECO:0000250" key="1"/>
<evidence type="ECO:0000305" key="2"/>
<organism>
    <name type="scientific">Halalkalibacterium halodurans (strain ATCC BAA-125 / DSM 18197 / FERM 7344 / JCM 9153 / C-125)</name>
    <name type="common">Bacillus halodurans</name>
    <dbReference type="NCBI Taxonomy" id="272558"/>
    <lineage>
        <taxon>Bacteria</taxon>
        <taxon>Bacillati</taxon>
        <taxon>Bacillota</taxon>
        <taxon>Bacilli</taxon>
        <taxon>Bacillales</taxon>
        <taxon>Bacillaceae</taxon>
        <taxon>Halalkalibacterium (ex Joshi et al. 2022)</taxon>
    </lineage>
</organism>
<keyword id="KW-0093">Biotin biosynthesis</keyword>
<keyword id="KW-0663">Pyridoxal phosphate</keyword>
<keyword id="KW-1185">Reference proteome</keyword>
<keyword id="KW-0808">Transferase</keyword>
<gene>
    <name type="primary">bioF</name>
    <name type="ordered locus">BH3907</name>
</gene>
<sequence length="395" mass="43656">MNADWLHAIEEKLTRLKDRGSFRQLVPTSEAALPWLTRENCRLLNLASNNYLGIADSKEFIERTEQLASSYAIGSTASRLIIGNHPLYEEAEYELTKWKKTEAALIFGSGYMANVGIISSIVGRGDAVFSDKLNHASIVDGCQLSRADHLRFRHNDMDHLETLLQKSPHKQKLIVVDALFSMDGDHANLHDLVTLKERYGAILMVDEAHSGGVYGATGGGLVEELGLNDRVDIQMGTFSKALGSYGGYVAGAKPFIEYLLNHARSLIFTTALPPYIVASHLAALQIVQEQPWRREKVQVLGERLRNGLEQLGFSLCGSESYIVPVLIGDNHDLLLVSESLQAAGIAAIPVRPPTVPRGEGRIRLTVTASHTEKDIDWAIEQFQRLPLVGRRELTP</sequence>
<proteinExistence type="inferred from homology"/>
<dbReference type="EC" id="2.3.1.47"/>
<dbReference type="EMBL" id="BA000004">
    <property type="protein sequence ID" value="BAB07626.1"/>
    <property type="molecule type" value="Genomic_DNA"/>
</dbReference>
<dbReference type="PIR" id="C84138">
    <property type="entry name" value="C84138"/>
</dbReference>
<dbReference type="RefSeq" id="WP_010900032.1">
    <property type="nucleotide sequence ID" value="NC_002570.2"/>
</dbReference>
<dbReference type="SMR" id="Q9K625"/>
<dbReference type="STRING" id="272558.gene:10729820"/>
<dbReference type="KEGG" id="bha:BH3907"/>
<dbReference type="eggNOG" id="COG0156">
    <property type="taxonomic scope" value="Bacteria"/>
</dbReference>
<dbReference type="HOGENOM" id="CLU_015846_11_2_9"/>
<dbReference type="OrthoDB" id="9807157at2"/>
<dbReference type="UniPathway" id="UPA00078"/>
<dbReference type="Proteomes" id="UP000001258">
    <property type="component" value="Chromosome"/>
</dbReference>
<dbReference type="GO" id="GO:0008710">
    <property type="term" value="F:8-amino-7-oxononanoate synthase activity"/>
    <property type="evidence" value="ECO:0007669"/>
    <property type="project" value="UniProtKB-EC"/>
</dbReference>
<dbReference type="GO" id="GO:0030170">
    <property type="term" value="F:pyridoxal phosphate binding"/>
    <property type="evidence" value="ECO:0007669"/>
    <property type="project" value="InterPro"/>
</dbReference>
<dbReference type="GO" id="GO:0009102">
    <property type="term" value="P:biotin biosynthetic process"/>
    <property type="evidence" value="ECO:0007669"/>
    <property type="project" value="UniProtKB-UniPathway"/>
</dbReference>
<dbReference type="CDD" id="cd06454">
    <property type="entry name" value="KBL_like"/>
    <property type="match status" value="1"/>
</dbReference>
<dbReference type="Gene3D" id="3.90.1150.10">
    <property type="entry name" value="Aspartate Aminotransferase, domain 1"/>
    <property type="match status" value="1"/>
</dbReference>
<dbReference type="Gene3D" id="3.40.640.10">
    <property type="entry name" value="Type I PLP-dependent aspartate aminotransferase-like (Major domain)"/>
    <property type="match status" value="1"/>
</dbReference>
<dbReference type="InterPro" id="IPR001917">
    <property type="entry name" value="Aminotrans_II_pyridoxalP_BS"/>
</dbReference>
<dbReference type="InterPro" id="IPR004839">
    <property type="entry name" value="Aminotransferase_I/II_large"/>
</dbReference>
<dbReference type="InterPro" id="IPR050087">
    <property type="entry name" value="AON_synthase_class-II"/>
</dbReference>
<dbReference type="InterPro" id="IPR004723">
    <property type="entry name" value="AONS_Archaea/Proteobacteria"/>
</dbReference>
<dbReference type="InterPro" id="IPR015424">
    <property type="entry name" value="PyrdxlP-dep_Trfase"/>
</dbReference>
<dbReference type="InterPro" id="IPR015421">
    <property type="entry name" value="PyrdxlP-dep_Trfase_major"/>
</dbReference>
<dbReference type="InterPro" id="IPR015422">
    <property type="entry name" value="PyrdxlP-dep_Trfase_small"/>
</dbReference>
<dbReference type="NCBIfam" id="TIGR00858">
    <property type="entry name" value="bioF"/>
    <property type="match status" value="1"/>
</dbReference>
<dbReference type="PANTHER" id="PTHR13693:SF100">
    <property type="entry name" value="8-AMINO-7-OXONONANOATE SYNTHASE"/>
    <property type="match status" value="1"/>
</dbReference>
<dbReference type="PANTHER" id="PTHR13693">
    <property type="entry name" value="CLASS II AMINOTRANSFERASE/8-AMINO-7-OXONONANOATE SYNTHASE"/>
    <property type="match status" value="1"/>
</dbReference>
<dbReference type="Pfam" id="PF00155">
    <property type="entry name" value="Aminotran_1_2"/>
    <property type="match status" value="1"/>
</dbReference>
<dbReference type="SUPFAM" id="SSF53383">
    <property type="entry name" value="PLP-dependent transferases"/>
    <property type="match status" value="1"/>
</dbReference>
<dbReference type="PROSITE" id="PS00599">
    <property type="entry name" value="AA_TRANSFER_CLASS_2"/>
    <property type="match status" value="1"/>
</dbReference>
<reference key="1">
    <citation type="journal article" date="2000" name="Nucleic Acids Res.">
        <title>Complete genome sequence of the alkaliphilic bacterium Bacillus halodurans and genomic sequence comparison with Bacillus subtilis.</title>
        <authorList>
            <person name="Takami H."/>
            <person name="Nakasone K."/>
            <person name="Takaki Y."/>
            <person name="Maeno G."/>
            <person name="Sasaki R."/>
            <person name="Masui N."/>
            <person name="Fuji F."/>
            <person name="Hirama C."/>
            <person name="Nakamura Y."/>
            <person name="Ogasawara N."/>
            <person name="Kuhara S."/>
            <person name="Horikoshi K."/>
        </authorList>
    </citation>
    <scope>NUCLEOTIDE SEQUENCE [LARGE SCALE GENOMIC DNA]</scope>
    <source>
        <strain>ATCC BAA-125 / DSM 18197 / FERM 7344 / JCM 9153 / C-125</strain>
    </source>
</reference>
<name>BIOF_HALH5</name>
<feature type="chain" id="PRO_0000380916" description="Putative 8-amino-7-oxononanoate synthase">
    <location>
        <begin position="1"/>
        <end position="395"/>
    </location>
</feature>
<feature type="binding site" evidence="1">
    <location>
        <position position="23"/>
    </location>
    <ligand>
        <name>substrate</name>
    </ligand>
</feature>
<feature type="binding site" evidence="1">
    <location>
        <begin position="110"/>
        <end position="111"/>
    </location>
    <ligand>
        <name>pyridoxal 5'-phosphate</name>
        <dbReference type="ChEBI" id="CHEBI:597326"/>
    </ligand>
</feature>
<feature type="binding site" evidence="1">
    <location>
        <position position="135"/>
    </location>
    <ligand>
        <name>substrate</name>
    </ligand>
</feature>
<feature type="binding site" evidence="1">
    <location>
        <position position="181"/>
    </location>
    <ligand>
        <name>pyridoxal 5'-phosphate</name>
        <dbReference type="ChEBI" id="CHEBI:597326"/>
    </ligand>
</feature>
<feature type="binding site" evidence="1">
    <location>
        <begin position="206"/>
        <end position="209"/>
    </location>
    <ligand>
        <name>pyridoxal 5'-phosphate</name>
        <dbReference type="ChEBI" id="CHEBI:597326"/>
    </ligand>
</feature>
<feature type="binding site" evidence="1">
    <location>
        <begin position="237"/>
        <end position="240"/>
    </location>
    <ligand>
        <name>pyridoxal 5'-phosphate</name>
        <dbReference type="ChEBI" id="CHEBI:597326"/>
    </ligand>
</feature>
<feature type="binding site" evidence="1">
    <location>
        <position position="354"/>
    </location>
    <ligand>
        <name>substrate</name>
    </ligand>
</feature>
<feature type="modified residue" description="N6-(pyridoxal phosphate)lysine" evidence="1">
    <location>
        <position position="240"/>
    </location>
</feature>